<organism>
    <name type="scientific">Microcystis aeruginosa (strain NIES-843 / IAM M-2473)</name>
    <dbReference type="NCBI Taxonomy" id="449447"/>
    <lineage>
        <taxon>Bacteria</taxon>
        <taxon>Bacillati</taxon>
        <taxon>Cyanobacteriota</taxon>
        <taxon>Cyanophyceae</taxon>
        <taxon>Oscillatoriophycideae</taxon>
        <taxon>Chroococcales</taxon>
        <taxon>Microcystaceae</taxon>
        <taxon>Microcystis</taxon>
    </lineage>
</organism>
<comment type="function">
    <text evidence="1">NDH-1 shuttles electrons from NAD(P)H, via FMN and iron-sulfur (Fe-S) centers, to quinones in the respiratory chain. The immediate electron acceptor for the enzyme in this species is believed to be plastoquinone. Couples the redox reaction to proton translocation (for every two electrons transferred, four hydrogen ions are translocated across the cytoplasmic membrane), and thus conserves the redox energy in a proton gradient.</text>
</comment>
<comment type="catalytic activity">
    <reaction evidence="1">
        <text>a plastoquinone + NADH + (n+1) H(+)(in) = a plastoquinol + NAD(+) + n H(+)(out)</text>
        <dbReference type="Rhea" id="RHEA:42608"/>
        <dbReference type="Rhea" id="RHEA-COMP:9561"/>
        <dbReference type="Rhea" id="RHEA-COMP:9562"/>
        <dbReference type="ChEBI" id="CHEBI:15378"/>
        <dbReference type="ChEBI" id="CHEBI:17757"/>
        <dbReference type="ChEBI" id="CHEBI:57540"/>
        <dbReference type="ChEBI" id="CHEBI:57945"/>
        <dbReference type="ChEBI" id="CHEBI:62192"/>
    </reaction>
</comment>
<comment type="catalytic activity">
    <reaction evidence="1">
        <text>a plastoquinone + NADPH + (n+1) H(+)(in) = a plastoquinol + NADP(+) + n H(+)(out)</text>
        <dbReference type="Rhea" id="RHEA:42612"/>
        <dbReference type="Rhea" id="RHEA-COMP:9561"/>
        <dbReference type="Rhea" id="RHEA-COMP:9562"/>
        <dbReference type="ChEBI" id="CHEBI:15378"/>
        <dbReference type="ChEBI" id="CHEBI:17757"/>
        <dbReference type="ChEBI" id="CHEBI:57783"/>
        <dbReference type="ChEBI" id="CHEBI:58349"/>
        <dbReference type="ChEBI" id="CHEBI:62192"/>
    </reaction>
</comment>
<comment type="subcellular location">
    <subcellularLocation>
        <location evidence="1">Cellular thylakoid membrane</location>
        <topology evidence="1">Multi-pass membrane protein</topology>
    </subcellularLocation>
</comment>
<comment type="similarity">
    <text evidence="1">Belongs to the complex I subunit 4 family.</text>
</comment>
<dbReference type="EC" id="7.1.1.-" evidence="1"/>
<dbReference type="EMBL" id="AP009552">
    <property type="protein sequence ID" value="BAG00475.1"/>
    <property type="molecule type" value="Genomic_DNA"/>
</dbReference>
<dbReference type="RefSeq" id="WP_012264249.1">
    <property type="nucleotide sequence ID" value="NC_010296.1"/>
</dbReference>
<dbReference type="SMR" id="B0JPG4"/>
<dbReference type="STRING" id="449447.MAE_06530"/>
<dbReference type="PaxDb" id="449447-MAE_06530"/>
<dbReference type="EnsemblBacteria" id="BAG00475">
    <property type="protein sequence ID" value="BAG00475"/>
    <property type="gene ID" value="MAE_06530"/>
</dbReference>
<dbReference type="GeneID" id="66705190"/>
<dbReference type="KEGG" id="mar:MAE_06530"/>
<dbReference type="eggNOG" id="COG1008">
    <property type="taxonomic scope" value="Bacteria"/>
</dbReference>
<dbReference type="HOGENOM" id="CLU_007100_4_0_3"/>
<dbReference type="BioCyc" id="MAER449447:MAE_RS02900-MONOMER"/>
<dbReference type="Proteomes" id="UP000001510">
    <property type="component" value="Chromosome"/>
</dbReference>
<dbReference type="GO" id="GO:0031676">
    <property type="term" value="C:plasma membrane-derived thylakoid membrane"/>
    <property type="evidence" value="ECO:0007669"/>
    <property type="project" value="UniProtKB-SubCell"/>
</dbReference>
<dbReference type="GO" id="GO:0008137">
    <property type="term" value="F:NADH dehydrogenase (ubiquinone) activity"/>
    <property type="evidence" value="ECO:0007669"/>
    <property type="project" value="InterPro"/>
</dbReference>
<dbReference type="GO" id="GO:0048039">
    <property type="term" value="F:ubiquinone binding"/>
    <property type="evidence" value="ECO:0007669"/>
    <property type="project" value="TreeGrafter"/>
</dbReference>
<dbReference type="GO" id="GO:0042773">
    <property type="term" value="P:ATP synthesis coupled electron transport"/>
    <property type="evidence" value="ECO:0007669"/>
    <property type="project" value="InterPro"/>
</dbReference>
<dbReference type="GO" id="GO:0015990">
    <property type="term" value="P:electron transport coupled proton transport"/>
    <property type="evidence" value="ECO:0007669"/>
    <property type="project" value="TreeGrafter"/>
</dbReference>
<dbReference type="HAMAP" id="MF_00491">
    <property type="entry name" value="NDH1_NuoM"/>
    <property type="match status" value="1"/>
</dbReference>
<dbReference type="InterPro" id="IPR022997">
    <property type="entry name" value="NADH_Q_OxRdtase_chain4"/>
</dbReference>
<dbReference type="InterPro" id="IPR010227">
    <property type="entry name" value="NADH_Q_OxRdtase_chainM/4"/>
</dbReference>
<dbReference type="InterPro" id="IPR003918">
    <property type="entry name" value="NADH_UbQ_OxRdtase"/>
</dbReference>
<dbReference type="InterPro" id="IPR001750">
    <property type="entry name" value="ND/Mrp_TM"/>
</dbReference>
<dbReference type="NCBIfam" id="TIGR01972">
    <property type="entry name" value="NDH_I_M"/>
    <property type="match status" value="1"/>
</dbReference>
<dbReference type="NCBIfam" id="NF002713">
    <property type="entry name" value="PRK02546.1"/>
    <property type="match status" value="1"/>
</dbReference>
<dbReference type="NCBIfam" id="NF009212">
    <property type="entry name" value="PRK12561.1"/>
    <property type="match status" value="1"/>
</dbReference>
<dbReference type="PANTHER" id="PTHR43507:SF21">
    <property type="entry name" value="NAD(P)H-QUINONE OXIDOREDUCTASE CHAIN 4, CHLOROPLASTIC"/>
    <property type="match status" value="1"/>
</dbReference>
<dbReference type="PANTHER" id="PTHR43507">
    <property type="entry name" value="NADH-UBIQUINONE OXIDOREDUCTASE CHAIN 4"/>
    <property type="match status" value="1"/>
</dbReference>
<dbReference type="Pfam" id="PF00361">
    <property type="entry name" value="Proton_antipo_M"/>
    <property type="match status" value="1"/>
</dbReference>
<dbReference type="PRINTS" id="PR01437">
    <property type="entry name" value="NUOXDRDTASE4"/>
</dbReference>
<protein>
    <recommendedName>
        <fullName evidence="1">NAD(P)H-quinone oxidoreductase chain 4 1</fullName>
        <ecNumber evidence="1">7.1.1.-</ecNumber>
    </recommendedName>
    <alternativeName>
        <fullName evidence="1">NAD(P)H dehydrogenase I, chain 4 1</fullName>
    </alternativeName>
    <alternativeName>
        <fullName evidence="1">NDH-1, chain 4 1</fullName>
    </alternativeName>
</protein>
<evidence type="ECO:0000255" key="1">
    <source>
        <dbReference type="HAMAP-Rule" id="MF_00491"/>
    </source>
</evidence>
<accession>B0JPG4</accession>
<reference key="1">
    <citation type="journal article" date="2007" name="DNA Res.">
        <title>Complete genomic structure of the bloom-forming toxic cyanobacterium Microcystis aeruginosa NIES-843.</title>
        <authorList>
            <person name="Kaneko T."/>
            <person name="Nakajima N."/>
            <person name="Okamoto S."/>
            <person name="Suzuki I."/>
            <person name="Tanabe Y."/>
            <person name="Tamaoki M."/>
            <person name="Nakamura Y."/>
            <person name="Kasai F."/>
            <person name="Watanabe A."/>
            <person name="Kawashima K."/>
            <person name="Kishida Y."/>
            <person name="Ono A."/>
            <person name="Shimizu Y."/>
            <person name="Takahashi C."/>
            <person name="Minami C."/>
            <person name="Fujishiro T."/>
            <person name="Kohara M."/>
            <person name="Katoh M."/>
            <person name="Nakazaki N."/>
            <person name="Nakayama S."/>
            <person name="Yamada M."/>
            <person name="Tabata S."/>
            <person name="Watanabe M.M."/>
        </authorList>
    </citation>
    <scope>NUCLEOTIDE SEQUENCE [LARGE SCALE GENOMIC DNA]</scope>
    <source>
        <strain>NIES-843 / IAM M-247</strain>
    </source>
</reference>
<keyword id="KW-0472">Membrane</keyword>
<keyword id="KW-0520">NAD</keyword>
<keyword id="KW-0521">NADP</keyword>
<keyword id="KW-0618">Plastoquinone</keyword>
<keyword id="KW-0874">Quinone</keyword>
<keyword id="KW-0793">Thylakoid</keyword>
<keyword id="KW-1278">Translocase</keyword>
<keyword id="KW-0812">Transmembrane</keyword>
<keyword id="KW-1133">Transmembrane helix</keyword>
<proteinExistence type="inferred from homology"/>
<name>NU4C1_MICAN</name>
<sequence>MNLTNFPWLTAIILFPIVAALLVPIIPDKDGKTVRWFALTVGLIDFALIIYAFYSSYDFANPNLQLVESYQWLPEIDLRWSLGADGLSMPLIILTGFITTLAILAAWPVTFKPKLFYFLMLLMYGGQIAVFAVQDLLLFFLVWELELVPVYLILSIWGGKRRLYAATKFILYTAGGSLFILVAALTMAFYGDTVSFDMVTIAGKDFPLKLQLFLYAGFLIAYGVKLPIFPLHTWLPDAHGEATAPAHMLLAGILLKMGGYALLRMNMGMLPDAHAVFAPVLVILGVVNIIYAALTSFAQRNLKRKIAYSSISHMGFVLIGMASFTDIGTSGAMLQMISHGLIGASLFFMVGCTYDRTHTLMLDEMGGVGKKMKKVFAMWTTCSLASLALPGMSGFVAELMVFIGFATSDAYSPTFRVIIVFLAAIGVILTPIYLLSMLREILYGPENKELEEHHALVDAEPREVFIIASLLVPIIGIGLYPKVATTIYDATTNKLTALVRNSVPSLVQQAKAKTPSFSLYSLKAPEI</sequence>
<gene>
    <name evidence="1" type="primary">ndhD1</name>
    <name type="ordered locus">MAE_06530</name>
</gene>
<feature type="chain" id="PRO_0000343232" description="NAD(P)H-quinone oxidoreductase chain 4 1">
    <location>
        <begin position="1"/>
        <end position="527"/>
    </location>
</feature>
<feature type="transmembrane region" description="Helical" evidence="1">
    <location>
        <begin position="6"/>
        <end position="26"/>
    </location>
</feature>
<feature type="transmembrane region" description="Helical" evidence="1">
    <location>
        <begin position="36"/>
        <end position="56"/>
    </location>
</feature>
<feature type="transmembrane region" description="Helical" evidence="1">
    <location>
        <begin position="91"/>
        <end position="111"/>
    </location>
</feature>
<feature type="transmembrane region" description="Helical" evidence="1">
    <location>
        <begin position="113"/>
        <end position="133"/>
    </location>
</feature>
<feature type="transmembrane region" description="Helical" evidence="1">
    <location>
        <begin position="136"/>
        <end position="156"/>
    </location>
</feature>
<feature type="transmembrane region" description="Helical" evidence="1">
    <location>
        <begin position="169"/>
        <end position="189"/>
    </location>
</feature>
<feature type="transmembrane region" description="Helical" evidence="1">
    <location>
        <begin position="212"/>
        <end position="232"/>
    </location>
</feature>
<feature type="transmembrane region" description="Helical" evidence="1">
    <location>
        <begin position="243"/>
        <end position="263"/>
    </location>
</feature>
<feature type="transmembrane region" description="Helical" evidence="1">
    <location>
        <begin position="275"/>
        <end position="295"/>
    </location>
</feature>
<feature type="transmembrane region" description="Helical" evidence="1">
    <location>
        <begin position="306"/>
        <end position="326"/>
    </location>
</feature>
<feature type="transmembrane region" description="Helical" evidence="1">
    <location>
        <begin position="331"/>
        <end position="351"/>
    </location>
</feature>
<feature type="transmembrane region" description="Helical" evidence="1">
    <location>
        <begin position="387"/>
        <end position="407"/>
    </location>
</feature>
<feature type="transmembrane region" description="Helical" evidence="1">
    <location>
        <begin position="417"/>
        <end position="437"/>
    </location>
</feature>